<keyword id="KW-0406">Ion transport</keyword>
<keyword id="KW-0520">NAD</keyword>
<keyword id="KW-0915">Sodium</keyword>
<keyword id="KW-0739">Sodium transport</keyword>
<keyword id="KW-1278">Translocase</keyword>
<keyword id="KW-0813">Transport</keyword>
<keyword id="KW-0830">Ubiquinone</keyword>
<evidence type="ECO:0000255" key="1">
    <source>
        <dbReference type="HAMAP-Rule" id="MF_00425"/>
    </source>
</evidence>
<sequence>MITIKKGLDLPIAGKPAQVIHSGNAVNQVAILGEEYVGMRPSMKVREGDVVKKGQVLFEDKKNPGVIFTAPASGTITAINRGEKRVLQSVVINVEGDEKITFAKYSTEQLNTLSSEQVKQNLIESGLWTALRTRPFSKVPSIESEASSIFVNAMDTNPLAADPSVVLKEYSQDFTNGLTVLSRLFPSKPLHLCKAGDSNIPTTDLENLQIHDFTGVHPAGLVGTHIHFIDPVGIQKTVWHINYQDVIAVGKLFTTGELYSERVISLAGPQVKQPRLVRTIIGANLSQLTQNELSAGKNRVISGSVLCGQIAKDSHDYLGRYALQVSVIAEGNEKEFFGWIMPQANKYSVTRTVLGHFSKKLFNFTTSENGGERAMVPIGSYERVMPLDILPTLLLRDLIVGDTDGAQELGCLELDEEDLALCSFVCPGKYEYGSILRQVLDKIEKEG</sequence>
<comment type="function">
    <text evidence="1">NQR complex catalyzes the reduction of ubiquinone-1 to ubiquinol by two successive reactions, coupled with the transport of Na(+) ions from the cytoplasm to the periplasm. NqrA to NqrE are probably involved in the second step, the conversion of ubisemiquinone to ubiquinol.</text>
</comment>
<comment type="catalytic activity">
    <reaction evidence="1">
        <text>a ubiquinone + n Na(+)(in) + NADH + H(+) = a ubiquinol + n Na(+)(out) + NAD(+)</text>
        <dbReference type="Rhea" id="RHEA:47748"/>
        <dbReference type="Rhea" id="RHEA-COMP:9565"/>
        <dbReference type="Rhea" id="RHEA-COMP:9566"/>
        <dbReference type="ChEBI" id="CHEBI:15378"/>
        <dbReference type="ChEBI" id="CHEBI:16389"/>
        <dbReference type="ChEBI" id="CHEBI:17976"/>
        <dbReference type="ChEBI" id="CHEBI:29101"/>
        <dbReference type="ChEBI" id="CHEBI:57540"/>
        <dbReference type="ChEBI" id="CHEBI:57945"/>
        <dbReference type="EC" id="7.2.1.1"/>
    </reaction>
</comment>
<comment type="subunit">
    <text evidence="1">Composed of six subunits; NqrA, NqrB, NqrC, NqrD, NqrE and NqrF.</text>
</comment>
<comment type="similarity">
    <text evidence="1">Belongs to the NqrA family.</text>
</comment>
<accession>A5UFW8</accession>
<reference key="1">
    <citation type="journal article" date="2007" name="Genome Biol.">
        <title>Characterization and modeling of the Haemophilus influenzae core and supragenomes based on the complete genomic sequences of Rd and 12 clinical nontypeable strains.</title>
        <authorList>
            <person name="Hogg J.S."/>
            <person name="Hu F.Z."/>
            <person name="Janto B."/>
            <person name="Boissy R."/>
            <person name="Hayes J."/>
            <person name="Keefe R."/>
            <person name="Post J.C."/>
            <person name="Ehrlich G.D."/>
        </authorList>
    </citation>
    <scope>NUCLEOTIDE SEQUENCE [LARGE SCALE GENOMIC DNA]</scope>
    <source>
        <strain>PittGG</strain>
    </source>
</reference>
<dbReference type="EC" id="7.2.1.1" evidence="1"/>
<dbReference type="EMBL" id="CP000672">
    <property type="protein sequence ID" value="ABQ99673.1"/>
    <property type="molecule type" value="Genomic_DNA"/>
</dbReference>
<dbReference type="SMR" id="A5UFW8"/>
<dbReference type="KEGG" id="hiq:CGSHiGG_03425"/>
<dbReference type="HOGENOM" id="CLU_046656_0_0_6"/>
<dbReference type="Proteomes" id="UP000001990">
    <property type="component" value="Chromosome"/>
</dbReference>
<dbReference type="GO" id="GO:0016655">
    <property type="term" value="F:oxidoreductase activity, acting on NAD(P)H, quinone or similar compound as acceptor"/>
    <property type="evidence" value="ECO:0007669"/>
    <property type="project" value="UniProtKB-UniRule"/>
</dbReference>
<dbReference type="GO" id="GO:0006814">
    <property type="term" value="P:sodium ion transport"/>
    <property type="evidence" value="ECO:0007669"/>
    <property type="project" value="UniProtKB-UniRule"/>
</dbReference>
<dbReference type="Gene3D" id="2.40.50.100">
    <property type="match status" value="1"/>
</dbReference>
<dbReference type="HAMAP" id="MF_00425">
    <property type="entry name" value="NqrA"/>
    <property type="match status" value="1"/>
</dbReference>
<dbReference type="InterPro" id="IPR008703">
    <property type="entry name" value="NqrA"/>
</dbReference>
<dbReference type="InterPro" id="IPR056148">
    <property type="entry name" value="NQRA_2nd"/>
</dbReference>
<dbReference type="InterPro" id="IPR022615">
    <property type="entry name" value="NqrA_C_domain"/>
</dbReference>
<dbReference type="InterPro" id="IPR056147">
    <property type="entry name" value="NQRA_N"/>
</dbReference>
<dbReference type="NCBIfam" id="TIGR01936">
    <property type="entry name" value="nqrA"/>
    <property type="match status" value="1"/>
</dbReference>
<dbReference type="NCBIfam" id="NF003759">
    <property type="entry name" value="PRK05352.1-2"/>
    <property type="match status" value="1"/>
</dbReference>
<dbReference type="NCBIfam" id="NF003761">
    <property type="entry name" value="PRK05352.1-4"/>
    <property type="match status" value="1"/>
</dbReference>
<dbReference type="PANTHER" id="PTHR37839">
    <property type="entry name" value="NA(+)-TRANSLOCATING NADH-QUINONE REDUCTASE SUBUNIT A"/>
    <property type="match status" value="1"/>
</dbReference>
<dbReference type="PANTHER" id="PTHR37839:SF1">
    <property type="entry name" value="NA(+)-TRANSLOCATING NADH-QUINONE REDUCTASE SUBUNIT A"/>
    <property type="match status" value="1"/>
</dbReference>
<dbReference type="Pfam" id="PF24836">
    <property type="entry name" value="NQRA_2nd"/>
    <property type="match status" value="1"/>
</dbReference>
<dbReference type="Pfam" id="PF05896">
    <property type="entry name" value="NQRA_N"/>
    <property type="match status" value="1"/>
</dbReference>
<dbReference type="Pfam" id="PF11973">
    <property type="entry name" value="NQRA_SLBB"/>
    <property type="match status" value="1"/>
</dbReference>
<name>NQRA_HAEIG</name>
<protein>
    <recommendedName>
        <fullName evidence="1">Na(+)-translocating NADH-quinone reductase subunit A</fullName>
        <shortName evidence="1">Na(+)-NQR subunit A</shortName>
        <shortName evidence="1">Na(+)-translocating NQR subunit A</shortName>
        <ecNumber evidence="1">7.2.1.1</ecNumber>
    </recommendedName>
    <alternativeName>
        <fullName evidence="1">NQR complex subunit A</fullName>
    </alternativeName>
    <alternativeName>
        <fullName evidence="1">NQR-1 subunit A</fullName>
    </alternativeName>
</protein>
<gene>
    <name evidence="1" type="primary">nqrA</name>
    <name type="ordered locus">CGSHiGG_03425</name>
</gene>
<proteinExistence type="inferred from homology"/>
<feature type="chain" id="PRO_1000060115" description="Na(+)-translocating NADH-quinone reductase subunit A">
    <location>
        <begin position="1"/>
        <end position="447"/>
    </location>
</feature>
<organism>
    <name type="scientific">Haemophilus influenzae (strain PittGG)</name>
    <dbReference type="NCBI Taxonomy" id="374931"/>
    <lineage>
        <taxon>Bacteria</taxon>
        <taxon>Pseudomonadati</taxon>
        <taxon>Pseudomonadota</taxon>
        <taxon>Gammaproteobacteria</taxon>
        <taxon>Pasteurellales</taxon>
        <taxon>Pasteurellaceae</taxon>
        <taxon>Haemophilus</taxon>
    </lineage>
</organism>